<accession>P21135</accession>
<accession>Q9UUM0</accession>
<keyword id="KW-0131">Cell cycle</keyword>
<keyword id="KW-0132">Cell division</keyword>
<keyword id="KW-0159">Chromosome partition</keyword>
<keyword id="KW-0963">Cytoplasm</keyword>
<keyword id="KW-0498">Mitosis</keyword>
<keyword id="KW-0539">Nucleus</keyword>
<keyword id="KW-1185">Reference proteome</keyword>
<keyword id="KW-0677">Repeat</keyword>
<keyword id="KW-0832">Ubl conjugation</keyword>
<sequence>MLPRTMFSYGKENAFPVTPISNRNGTKGAGSKRAPLGSTKQSNAPSSVTVPRTVLGGKSTNISKFISAPSTKKMSPMDISMDSPTILEPNSQGISRSAVQERSKRLSASPRRSSLTDTPLPNELEEDIEYMPPPVHLDPIQSLGFDDVAIDCETLDPWPSMQNKATSVTIRNTPASDFHVYKEFSDDDPIQFPLLSVDGDSPLTEKDTNLTTPATLKASDQQRKVLEKPSVSKQSSSRTRLSTVYRTKLASGKSIPRPLSHKLTRPRVTASGNSRRRPLSRSIHSLSSSRIDFSSLDTGLL</sequence>
<reference key="1">
    <citation type="journal article" date="1990" name="Cell">
        <title>The fission yeast cut1+ gene regulates spindle pole body duplication and has homology to the budding yeast ESP1 gene.</title>
        <authorList>
            <person name="Uzawa S."/>
            <person name="Samejima I."/>
            <person name="Hirano T."/>
            <person name="Tanaka K."/>
            <person name="Yanagida M."/>
        </authorList>
    </citation>
    <scope>NUCLEOTIDE SEQUENCE [GENOMIC DNA]</scope>
    <source>
        <strain>972 / ATCC 24843</strain>
    </source>
</reference>
<reference key="2">
    <citation type="journal article" date="2002" name="Nature">
        <title>The genome sequence of Schizosaccharomyces pombe.</title>
        <authorList>
            <person name="Wood V."/>
            <person name="Gwilliam R."/>
            <person name="Rajandream M.A."/>
            <person name="Lyne M.H."/>
            <person name="Lyne R."/>
            <person name="Stewart A."/>
            <person name="Sgouros J.G."/>
            <person name="Peat N."/>
            <person name="Hayles J."/>
            <person name="Baker S.G."/>
            <person name="Basham D."/>
            <person name="Bowman S."/>
            <person name="Brooks K."/>
            <person name="Brown D."/>
            <person name="Brown S."/>
            <person name="Chillingworth T."/>
            <person name="Churcher C.M."/>
            <person name="Collins M."/>
            <person name="Connor R."/>
            <person name="Cronin A."/>
            <person name="Davis P."/>
            <person name="Feltwell T."/>
            <person name="Fraser A."/>
            <person name="Gentles S."/>
            <person name="Goble A."/>
            <person name="Hamlin N."/>
            <person name="Harris D.E."/>
            <person name="Hidalgo J."/>
            <person name="Hodgson G."/>
            <person name="Holroyd S."/>
            <person name="Hornsby T."/>
            <person name="Howarth S."/>
            <person name="Huckle E.J."/>
            <person name="Hunt S."/>
            <person name="Jagels K."/>
            <person name="James K.D."/>
            <person name="Jones L."/>
            <person name="Jones M."/>
            <person name="Leather S."/>
            <person name="McDonald S."/>
            <person name="McLean J."/>
            <person name="Mooney P."/>
            <person name="Moule S."/>
            <person name="Mungall K.L."/>
            <person name="Murphy L.D."/>
            <person name="Niblett D."/>
            <person name="Odell C."/>
            <person name="Oliver K."/>
            <person name="O'Neil S."/>
            <person name="Pearson D."/>
            <person name="Quail M.A."/>
            <person name="Rabbinowitsch E."/>
            <person name="Rutherford K.M."/>
            <person name="Rutter S."/>
            <person name="Saunders D."/>
            <person name="Seeger K."/>
            <person name="Sharp S."/>
            <person name="Skelton J."/>
            <person name="Simmonds M.N."/>
            <person name="Squares R."/>
            <person name="Squares S."/>
            <person name="Stevens K."/>
            <person name="Taylor K."/>
            <person name="Taylor R.G."/>
            <person name="Tivey A."/>
            <person name="Walsh S.V."/>
            <person name="Warren T."/>
            <person name="Whitehead S."/>
            <person name="Woodward J.R."/>
            <person name="Volckaert G."/>
            <person name="Aert R."/>
            <person name="Robben J."/>
            <person name="Grymonprez B."/>
            <person name="Weltjens I."/>
            <person name="Vanstreels E."/>
            <person name="Rieger M."/>
            <person name="Schaefer M."/>
            <person name="Mueller-Auer S."/>
            <person name="Gabel C."/>
            <person name="Fuchs M."/>
            <person name="Duesterhoeft A."/>
            <person name="Fritzc C."/>
            <person name="Holzer E."/>
            <person name="Moestl D."/>
            <person name="Hilbert H."/>
            <person name="Borzym K."/>
            <person name="Langer I."/>
            <person name="Beck A."/>
            <person name="Lehrach H."/>
            <person name="Reinhardt R."/>
            <person name="Pohl T.M."/>
            <person name="Eger P."/>
            <person name="Zimmermann W."/>
            <person name="Wedler H."/>
            <person name="Wambutt R."/>
            <person name="Purnelle B."/>
            <person name="Goffeau A."/>
            <person name="Cadieu E."/>
            <person name="Dreano S."/>
            <person name="Gloux S."/>
            <person name="Lelaure V."/>
            <person name="Mottier S."/>
            <person name="Galibert F."/>
            <person name="Aves S.J."/>
            <person name="Xiang Z."/>
            <person name="Hunt C."/>
            <person name="Moore K."/>
            <person name="Hurst S.M."/>
            <person name="Lucas M."/>
            <person name="Rochet M."/>
            <person name="Gaillardin C."/>
            <person name="Tallada V.A."/>
            <person name="Garzon A."/>
            <person name="Thode G."/>
            <person name="Daga R.R."/>
            <person name="Cruzado L."/>
            <person name="Jimenez J."/>
            <person name="Sanchez M."/>
            <person name="del Rey F."/>
            <person name="Benito J."/>
            <person name="Dominguez A."/>
            <person name="Revuelta J.L."/>
            <person name="Moreno S."/>
            <person name="Armstrong J."/>
            <person name="Forsburg S.L."/>
            <person name="Cerutti L."/>
            <person name="Lowe T."/>
            <person name="McCombie W.R."/>
            <person name="Paulsen I."/>
            <person name="Potashkin J."/>
            <person name="Shpakovski G.V."/>
            <person name="Ussery D."/>
            <person name="Barrell B.G."/>
            <person name="Nurse P."/>
        </authorList>
    </citation>
    <scope>NUCLEOTIDE SEQUENCE [LARGE SCALE GENOMIC DNA]</scope>
    <source>
        <strain>972 / ATCC 24843</strain>
    </source>
</reference>
<reference key="3">
    <citation type="journal article" date="1996" name="Nature">
        <title>Cut2 proteolysis required for sister-chromatid seperation in fission yeast.</title>
        <authorList>
            <person name="Funabiki H."/>
            <person name="Yamano H."/>
            <person name="Kumada K."/>
            <person name="Nagao K."/>
            <person name="Hunt T."/>
            <person name="Yanagida M."/>
        </authorList>
    </citation>
    <scope>FUNCTION</scope>
</reference>
<reference key="4">
    <citation type="journal article" date="1997" name="EMBO J.">
        <title>Fission yeast Cut2 required for anaphase has two destruction boxes.</title>
        <authorList>
            <person name="Funabiki H."/>
            <person name="Yamano H."/>
            <person name="Nagao K."/>
            <person name="Tanaka H."/>
            <person name="Yasuda H."/>
            <person name="Hunt T."/>
            <person name="Yanagida M."/>
        </authorList>
    </citation>
    <scope>FUNCTION</scope>
    <scope>UBIQUITINATION</scope>
    <scope>MUTAGENESIS OF 33-ARG--LEU-36 AND 52-ARG--LEU-55</scope>
</reference>
<comment type="function">
    <text evidence="3 4">Regulatory protein, which plays a central role in chromosome stability. Probably acts by blocking the action of key proteins. During the mitosis, it blocks separase/cut1 function, preventing the proteolysis of the cohesin complex and the subsequent segregation of the chromosomes. At the onset of anaphase, it is ubiquitinated, conducting to its destruction and to the liberation of cut1.</text>
</comment>
<comment type="subunit">
    <text>Interacts with the caspase-like cut1, and prevents its protease activity probably by covering its active site.</text>
</comment>
<comment type="subcellular location">
    <subcellularLocation>
        <location>Cytoplasm</location>
    </subcellularLocation>
    <subcellularLocation>
        <location>Nucleus</location>
    </subcellularLocation>
</comment>
<comment type="domain">
    <text evidence="1">The N-terminal destruction boxes (D-box 1 and D-box 2) act as a recognition signal for degradation via the ubiquitin-proteasome pathway.</text>
</comment>
<comment type="PTM">
    <text evidence="4">Ubiquitinated by the anaphase promoting complex (APC) at the onset of anaphase, conducting to its degradation.</text>
</comment>
<comment type="similarity">
    <text evidence="5">Belongs to the securin family.</text>
</comment>
<proteinExistence type="evidence at protein level"/>
<protein>
    <recommendedName>
        <fullName>Securin</fullName>
    </recommendedName>
    <alternativeName>
        <fullName>Cell untimely torn protein 2</fullName>
        <shortName>Protein Cut2</shortName>
    </alternativeName>
</protein>
<gene>
    <name type="primary">cut2</name>
    <name type="ORF">SPBC14C8.01c</name>
    <name type="ORF">SPBC1815.02c</name>
</gene>
<dbReference type="EMBL" id="M57750">
    <property type="protein sequence ID" value="AAA35299.1"/>
    <property type="molecule type" value="Genomic_DNA"/>
</dbReference>
<dbReference type="EMBL" id="CU329671">
    <property type="protein sequence ID" value="CAB43487.2"/>
    <property type="molecule type" value="Genomic_DNA"/>
</dbReference>
<dbReference type="PIR" id="B35694">
    <property type="entry name" value="B35694"/>
</dbReference>
<dbReference type="RefSeq" id="NP_595904.2">
    <property type="nucleotide sequence ID" value="NM_001021811.3"/>
</dbReference>
<dbReference type="BioGRID" id="276196">
    <property type="interactions" value="58"/>
</dbReference>
<dbReference type="DIP" id="DIP-317N"/>
<dbReference type="STRING" id="284812.P21135"/>
<dbReference type="iPTMnet" id="P21135"/>
<dbReference type="PaxDb" id="4896-SPBC14C8.01c.1"/>
<dbReference type="EnsemblFungi" id="SPBC14C8.01c.1">
    <property type="protein sequence ID" value="SPBC14C8.01c.1:pep"/>
    <property type="gene ID" value="SPBC14C8.01c"/>
</dbReference>
<dbReference type="GeneID" id="2539641"/>
<dbReference type="KEGG" id="spo:2539641"/>
<dbReference type="PomBase" id="SPBC14C8.01c">
    <property type="gene designation" value="cut2"/>
</dbReference>
<dbReference type="VEuPathDB" id="FungiDB:SPBC14C8.01c"/>
<dbReference type="HOGENOM" id="CLU_924889_0_0_1"/>
<dbReference type="InParanoid" id="P21135"/>
<dbReference type="OMA" id="TSARNDM"/>
<dbReference type="PRO" id="PR:P21135"/>
<dbReference type="Proteomes" id="UP000002485">
    <property type="component" value="Chromosome II"/>
</dbReference>
<dbReference type="GO" id="GO:0005737">
    <property type="term" value="C:cytoplasm"/>
    <property type="evidence" value="ECO:0007669"/>
    <property type="project" value="UniProtKB-SubCell"/>
</dbReference>
<dbReference type="GO" id="GO:0072687">
    <property type="term" value="C:meiotic spindle"/>
    <property type="evidence" value="ECO:0000314"/>
    <property type="project" value="PomBase"/>
</dbReference>
<dbReference type="GO" id="GO:0005634">
    <property type="term" value="C:nucleus"/>
    <property type="evidence" value="ECO:0000314"/>
    <property type="project" value="PomBase"/>
</dbReference>
<dbReference type="GO" id="GO:1990520">
    <property type="term" value="C:separase-securin complex"/>
    <property type="evidence" value="ECO:0000314"/>
    <property type="project" value="PomBase"/>
</dbReference>
<dbReference type="GO" id="GO:0004866">
    <property type="term" value="F:endopeptidase inhibitor activity"/>
    <property type="evidence" value="ECO:0000304"/>
    <property type="project" value="PomBase"/>
</dbReference>
<dbReference type="GO" id="GO:0051301">
    <property type="term" value="P:cell division"/>
    <property type="evidence" value="ECO:0007669"/>
    <property type="project" value="UniProtKB-KW"/>
</dbReference>
<dbReference type="GO" id="GO:0051276">
    <property type="term" value="P:chromosome organization"/>
    <property type="evidence" value="ECO:0007669"/>
    <property type="project" value="InterPro"/>
</dbReference>
<dbReference type="GO" id="GO:0007059">
    <property type="term" value="P:chromosome segregation"/>
    <property type="evidence" value="ECO:0007669"/>
    <property type="project" value="UniProtKB-KW"/>
</dbReference>
<dbReference type="GO" id="GO:0006974">
    <property type="term" value="P:DNA damage response"/>
    <property type="evidence" value="ECO:0000315"/>
    <property type="project" value="PomBase"/>
</dbReference>
<dbReference type="GO" id="GO:0140013">
    <property type="term" value="P:meiotic nuclear division"/>
    <property type="evidence" value="ECO:0000315"/>
    <property type="project" value="PomBase"/>
</dbReference>
<dbReference type="GO" id="GO:2000816">
    <property type="term" value="P:negative regulation of mitotic sister chromatid separation"/>
    <property type="evidence" value="ECO:0000315"/>
    <property type="project" value="PomBase"/>
</dbReference>
<dbReference type="InterPro" id="IPR006940">
    <property type="entry name" value="Securin_separation_inhibitor"/>
</dbReference>
<dbReference type="PANTHER" id="PTHR10418:SF2">
    <property type="entry name" value="SECURIN"/>
    <property type="match status" value="1"/>
</dbReference>
<dbReference type="PANTHER" id="PTHR10418">
    <property type="entry name" value="SECURIN-3"/>
    <property type="match status" value="1"/>
</dbReference>
<dbReference type="Pfam" id="PF04856">
    <property type="entry name" value="Securin"/>
    <property type="match status" value="1"/>
</dbReference>
<feature type="chain" id="PRO_0000206365" description="Securin">
    <location>
        <begin position="1"/>
        <end position="301"/>
    </location>
</feature>
<feature type="repeat">
    <location>
        <begin position="250"/>
        <end position="260"/>
    </location>
</feature>
<feature type="repeat">
    <location>
        <begin position="270"/>
        <end position="280"/>
    </location>
</feature>
<feature type="region of interest" description="Disordered" evidence="2">
    <location>
        <begin position="1"/>
        <end position="55"/>
    </location>
</feature>
<feature type="region of interest" description="Disordered" evidence="2">
    <location>
        <begin position="82"/>
        <end position="120"/>
    </location>
</feature>
<feature type="region of interest" description="Disordered" evidence="2">
    <location>
        <begin position="218"/>
        <end position="284"/>
    </location>
</feature>
<feature type="short sequence motif" description="D-box 1">
    <location>
        <begin position="33"/>
        <end position="36"/>
    </location>
</feature>
<feature type="short sequence motif" description="D-box 2">
    <location>
        <begin position="52"/>
        <end position="55"/>
    </location>
</feature>
<feature type="compositionally biased region" description="Polar residues" evidence="2">
    <location>
        <begin position="38"/>
        <end position="50"/>
    </location>
</feature>
<feature type="compositionally biased region" description="Polar residues" evidence="2">
    <location>
        <begin position="88"/>
        <end position="98"/>
    </location>
</feature>
<feature type="compositionally biased region" description="Polar residues" evidence="2">
    <location>
        <begin position="110"/>
        <end position="119"/>
    </location>
</feature>
<feature type="compositionally biased region" description="Polar residues" evidence="2">
    <location>
        <begin position="231"/>
        <end position="245"/>
    </location>
</feature>
<feature type="mutagenesis site" description="Abolishes ubiquitination at first D-box site. Abolishes ubiquitination and subsequent degradation; when associated with A-52 and A-55." evidence="4">
    <original>RAPL</original>
    <variation>AAPA</variation>
    <location>
        <begin position="33"/>
        <end position="36"/>
    </location>
</feature>
<feature type="mutagenesis site" description="Abolishes ubiquitination at second D-box site. Abolishes ubiquitination and subsequent degradation; when associated with A-33 and A-36." evidence="4">
    <original>RTVL</original>
    <variation>ATVA</variation>
    <location>
        <begin position="52"/>
        <end position="55"/>
    </location>
</feature>
<name>SECU_SCHPO</name>
<organism>
    <name type="scientific">Schizosaccharomyces pombe (strain 972 / ATCC 24843)</name>
    <name type="common">Fission yeast</name>
    <dbReference type="NCBI Taxonomy" id="284812"/>
    <lineage>
        <taxon>Eukaryota</taxon>
        <taxon>Fungi</taxon>
        <taxon>Dikarya</taxon>
        <taxon>Ascomycota</taxon>
        <taxon>Taphrinomycotina</taxon>
        <taxon>Schizosaccharomycetes</taxon>
        <taxon>Schizosaccharomycetales</taxon>
        <taxon>Schizosaccharomycetaceae</taxon>
        <taxon>Schizosaccharomyces</taxon>
    </lineage>
</organism>
<evidence type="ECO:0000250" key="1"/>
<evidence type="ECO:0000256" key="2">
    <source>
        <dbReference type="SAM" id="MobiDB-lite"/>
    </source>
</evidence>
<evidence type="ECO:0000269" key="3">
    <source>
    </source>
</evidence>
<evidence type="ECO:0000269" key="4">
    <source>
    </source>
</evidence>
<evidence type="ECO:0000305" key="5"/>